<feature type="chain" id="PRO_0000409036" description="Nuclear rim protein 1">
    <location>
        <begin position="1"/>
        <end position="511"/>
    </location>
</feature>
<feature type="transmembrane region" description="Helical" evidence="2">
    <location>
        <begin position="146"/>
        <end position="166"/>
    </location>
</feature>
<feature type="transmembrane region" description="Helical" evidence="2">
    <location>
        <begin position="255"/>
        <end position="275"/>
    </location>
</feature>
<feature type="region of interest" description="Disordered" evidence="3">
    <location>
        <begin position="420"/>
        <end position="511"/>
    </location>
</feature>
<feature type="compositionally biased region" description="Polar residues" evidence="3">
    <location>
        <begin position="439"/>
        <end position="448"/>
    </location>
</feature>
<gene>
    <name type="primary">NUR1</name>
    <name type="ordered locus">ZYRO0A07942g</name>
</gene>
<comment type="function">
    <text evidence="1">Member of a perinuclear network that controls recombination at multiple loci to maintain genome stability. Required for rDNA repeat stability (By similarity).</text>
</comment>
<comment type="subcellular location">
    <subcellularLocation>
        <location evidence="1">Nucleus membrane</location>
        <topology evidence="1">Multi-pass membrane protein</topology>
    </subcellularLocation>
</comment>
<comment type="similarity">
    <text evidence="4">Belongs to the NUR1 family.</text>
</comment>
<keyword id="KW-0472">Membrane</keyword>
<keyword id="KW-0539">Nucleus</keyword>
<keyword id="KW-1185">Reference proteome</keyword>
<keyword id="KW-0812">Transmembrane</keyword>
<keyword id="KW-1133">Transmembrane helix</keyword>
<protein>
    <recommendedName>
        <fullName>Nuclear rim protein 1</fullName>
    </recommendedName>
</protein>
<dbReference type="EMBL" id="CU928173">
    <property type="protein sequence ID" value="CAR25779.1"/>
    <property type="molecule type" value="Genomic_DNA"/>
</dbReference>
<dbReference type="RefSeq" id="XP_002494712.1">
    <property type="nucleotide sequence ID" value="XM_002494667.1"/>
</dbReference>
<dbReference type="SMR" id="C5DQ18"/>
<dbReference type="FunCoup" id="C5DQ18">
    <property type="interactions" value="42"/>
</dbReference>
<dbReference type="STRING" id="559307.C5DQ18"/>
<dbReference type="GeneID" id="8201693"/>
<dbReference type="KEGG" id="zro:ZYRO0A07942g"/>
<dbReference type="HOGENOM" id="CLU_033252_0_0_1"/>
<dbReference type="InParanoid" id="C5DQ18"/>
<dbReference type="Proteomes" id="UP000008536">
    <property type="component" value="Chromosome A"/>
</dbReference>
<dbReference type="GO" id="GO:0031965">
    <property type="term" value="C:nuclear membrane"/>
    <property type="evidence" value="ECO:0007669"/>
    <property type="project" value="UniProtKB-SubCell"/>
</dbReference>
<dbReference type="GO" id="GO:0043007">
    <property type="term" value="P:maintenance of rDNA"/>
    <property type="evidence" value="ECO:0007669"/>
    <property type="project" value="TreeGrafter"/>
</dbReference>
<dbReference type="GO" id="GO:0007096">
    <property type="term" value="P:regulation of exit from mitosis"/>
    <property type="evidence" value="ECO:0007669"/>
    <property type="project" value="TreeGrafter"/>
</dbReference>
<dbReference type="InterPro" id="IPR018819">
    <property type="entry name" value="Nur1/Mug154"/>
</dbReference>
<dbReference type="PANTHER" id="PTHR28293">
    <property type="entry name" value="NUCLEAR RIM PROTEIN 1"/>
    <property type="match status" value="1"/>
</dbReference>
<dbReference type="PANTHER" id="PTHR28293:SF1">
    <property type="entry name" value="NUCLEAR RIM PROTEIN 1"/>
    <property type="match status" value="1"/>
</dbReference>
<dbReference type="Pfam" id="PF10332">
    <property type="entry name" value="DUF2418"/>
    <property type="match status" value="1"/>
</dbReference>
<sequence length="511" mass="58897">MSLRISKDVSVSVNTADLLPEDDGFDRVDGDNRGWFSVFLGLFNTHPSDWNIALNEAIETIDWDSKSITLAQPLGNFFTFAFYVVRLLQLSLIKPNLSRINEKTDHFDLSKSEMLKKYEYLYHFTNDKNQSVGNVYYRFLGRLGKFFDICIVLLTFTNGFITYKFFWGNFKMYCLFYLKKGPHLRNVTKASLQKLGQDDDDGSLWSSLRYFWNGTKDKEGSTDDRDDDDGDIHYKLFKWTPSQFITMLFVSFAPTAVVFLLFTEVSFLTLIAVIVHQWVLHRLVIDCYGNRLVHESVIASANLAEVEAKFVKPRMSKKVQDVAIDCTPHGDGMVKFYPALTTNRSHIFQTHSLTGELITETFNPSTKEFEDLQTEGTTHNVIRTAPYAAGDLLHRDPYWYQRNMIMRDVAHRPYFHSREVSPTRYHPSRISPRPGQYSPLVSSTSGMSTPLMRPDRSPFLNTRPSLGEREELFHRGNSRSPLRQPIENFKSLDRSSDSQSPIRRHNGDSDA</sequence>
<name>NUR1_ZYGRC</name>
<evidence type="ECO:0000250" key="1"/>
<evidence type="ECO:0000255" key="2"/>
<evidence type="ECO:0000256" key="3">
    <source>
        <dbReference type="SAM" id="MobiDB-lite"/>
    </source>
</evidence>
<evidence type="ECO:0000305" key="4"/>
<proteinExistence type="inferred from homology"/>
<accession>C5DQ18</accession>
<organism>
    <name type="scientific">Zygosaccharomyces rouxii (strain ATCC 2623 / CBS 732 / NBRC 1130 / NCYC 568 / NRRL Y-229)</name>
    <dbReference type="NCBI Taxonomy" id="559307"/>
    <lineage>
        <taxon>Eukaryota</taxon>
        <taxon>Fungi</taxon>
        <taxon>Dikarya</taxon>
        <taxon>Ascomycota</taxon>
        <taxon>Saccharomycotina</taxon>
        <taxon>Saccharomycetes</taxon>
        <taxon>Saccharomycetales</taxon>
        <taxon>Saccharomycetaceae</taxon>
        <taxon>Zygosaccharomyces</taxon>
    </lineage>
</organism>
<reference key="1">
    <citation type="journal article" date="2009" name="Genome Res.">
        <title>Comparative genomics of protoploid Saccharomycetaceae.</title>
        <authorList>
            <consortium name="The Genolevures Consortium"/>
            <person name="Souciet J.-L."/>
            <person name="Dujon B."/>
            <person name="Gaillardin C."/>
            <person name="Johnston M."/>
            <person name="Baret P.V."/>
            <person name="Cliften P."/>
            <person name="Sherman D.J."/>
            <person name="Weissenbach J."/>
            <person name="Westhof E."/>
            <person name="Wincker P."/>
            <person name="Jubin C."/>
            <person name="Poulain J."/>
            <person name="Barbe V."/>
            <person name="Segurens B."/>
            <person name="Artiguenave F."/>
            <person name="Anthouard V."/>
            <person name="Vacherie B."/>
            <person name="Val M.-E."/>
            <person name="Fulton R.S."/>
            <person name="Minx P."/>
            <person name="Wilson R."/>
            <person name="Durrens P."/>
            <person name="Jean G."/>
            <person name="Marck C."/>
            <person name="Martin T."/>
            <person name="Nikolski M."/>
            <person name="Rolland T."/>
            <person name="Seret M.-L."/>
            <person name="Casaregola S."/>
            <person name="Despons L."/>
            <person name="Fairhead C."/>
            <person name="Fischer G."/>
            <person name="Lafontaine I."/>
            <person name="Leh V."/>
            <person name="Lemaire M."/>
            <person name="de Montigny J."/>
            <person name="Neuveglise C."/>
            <person name="Thierry A."/>
            <person name="Blanc-Lenfle I."/>
            <person name="Bleykasten C."/>
            <person name="Diffels J."/>
            <person name="Fritsch E."/>
            <person name="Frangeul L."/>
            <person name="Goeffon A."/>
            <person name="Jauniaux N."/>
            <person name="Kachouri-Lafond R."/>
            <person name="Payen C."/>
            <person name="Potier S."/>
            <person name="Pribylova L."/>
            <person name="Ozanne C."/>
            <person name="Richard G.-F."/>
            <person name="Sacerdot C."/>
            <person name="Straub M.-L."/>
            <person name="Talla E."/>
        </authorList>
    </citation>
    <scope>NUCLEOTIDE SEQUENCE [LARGE SCALE GENOMIC DNA]</scope>
    <source>
        <strain>ATCC 2623 / CBS 732 / BCRC 21506 / NBRC 1130 / NCYC 568 / NRRL Y-229</strain>
    </source>
</reference>